<keyword id="KW-0963">Cytoplasm</keyword>
<sequence>MDEQEPAPKRGRRFKEQTPVQRALGLLVRREHSRKELNRKLLARGIEPDAAQAAVDRLTDEGWQDDTRFAAAVVRNRAGSGYGPLHIRAELGTHGLDSEAISAALAAFEGDWTENARDLIRRRFGEQGPTDLPQRRKAADLLARRGFEGNSIRAATRFDLED</sequence>
<organism>
    <name type="scientific">Xanthomonas citri</name>
    <name type="common">Xanthomonas campestris pv. citri</name>
    <dbReference type="NCBI Taxonomy" id="346"/>
    <lineage>
        <taxon>Bacteria</taxon>
        <taxon>Pseudomonadati</taxon>
        <taxon>Pseudomonadota</taxon>
        <taxon>Gammaproteobacteria</taxon>
        <taxon>Lysobacterales</taxon>
        <taxon>Lysobacteraceae</taxon>
        <taxon>Xanthomonas</taxon>
    </lineage>
</organism>
<name>RECX_XANCI</name>
<gene>
    <name type="primary">recX</name>
</gene>
<evidence type="ECO:0000250" key="1"/>
<evidence type="ECO:0000305" key="2"/>
<proteinExistence type="inferred from homology"/>
<accession>P0A0W7</accession>
<accession>Q9LCZ3</accession>
<comment type="function">
    <text evidence="1">Modulates RecA activity.</text>
</comment>
<comment type="subcellular location">
    <subcellularLocation>
        <location evidence="2">Cytoplasm</location>
    </subcellularLocation>
</comment>
<comment type="similarity">
    <text evidence="2">Belongs to the RecX family.</text>
</comment>
<reference key="1">
    <citation type="journal article" date="2001" name="Curr. Microbiol.">
        <title>Molecular characterization and expression of the recX gene of Xanthomonas campestris pv. citri.</title>
        <authorList>
            <person name="Yang M.-K."/>
            <person name="Chou M.-E."/>
            <person name="Yang Y.-C."/>
        </authorList>
    </citation>
    <scope>NUCLEOTIDE SEQUENCE [GENOMIC DNA]</scope>
    <source>
        <strain>XW47</strain>
    </source>
</reference>
<feature type="chain" id="PRO_0000162496" description="Regulatory protein RecX">
    <location>
        <begin position="1"/>
        <end position="162"/>
    </location>
</feature>
<dbReference type="EMBL" id="AF006590">
    <property type="protein sequence ID" value="AAF65178.1"/>
    <property type="molecule type" value="Genomic_DNA"/>
</dbReference>
<dbReference type="RefSeq" id="WP_003481873.1">
    <property type="nucleotide sequence ID" value="NZ_JAJGQP010000008.1"/>
</dbReference>
<dbReference type="SMR" id="P0A0W7"/>
<dbReference type="GeneID" id="66910891"/>
<dbReference type="OMA" id="EPQDWFE"/>
<dbReference type="GO" id="GO:0005737">
    <property type="term" value="C:cytoplasm"/>
    <property type="evidence" value="ECO:0007669"/>
    <property type="project" value="UniProtKB-SubCell"/>
</dbReference>
<dbReference type="GO" id="GO:0006282">
    <property type="term" value="P:regulation of DNA repair"/>
    <property type="evidence" value="ECO:0007669"/>
    <property type="project" value="UniProtKB-UniRule"/>
</dbReference>
<dbReference type="Gene3D" id="1.10.10.10">
    <property type="entry name" value="Winged helix-like DNA-binding domain superfamily/Winged helix DNA-binding domain"/>
    <property type="match status" value="3"/>
</dbReference>
<dbReference type="HAMAP" id="MF_01114">
    <property type="entry name" value="RecX"/>
    <property type="match status" value="1"/>
</dbReference>
<dbReference type="InterPro" id="IPR053926">
    <property type="entry name" value="RecX_HTH_1st"/>
</dbReference>
<dbReference type="InterPro" id="IPR053924">
    <property type="entry name" value="RecX_HTH_2nd"/>
</dbReference>
<dbReference type="InterPro" id="IPR053925">
    <property type="entry name" value="RecX_HTH_3rd"/>
</dbReference>
<dbReference type="InterPro" id="IPR003783">
    <property type="entry name" value="Regulatory_RecX"/>
</dbReference>
<dbReference type="InterPro" id="IPR036388">
    <property type="entry name" value="WH-like_DNA-bd_sf"/>
</dbReference>
<dbReference type="NCBIfam" id="NF001054">
    <property type="entry name" value="PRK00117.2-1"/>
    <property type="match status" value="1"/>
</dbReference>
<dbReference type="PANTHER" id="PTHR33602">
    <property type="entry name" value="REGULATORY PROTEIN RECX FAMILY PROTEIN"/>
    <property type="match status" value="1"/>
</dbReference>
<dbReference type="PANTHER" id="PTHR33602:SF1">
    <property type="entry name" value="REGULATORY PROTEIN RECX FAMILY PROTEIN"/>
    <property type="match status" value="1"/>
</dbReference>
<dbReference type="Pfam" id="PF21982">
    <property type="entry name" value="RecX_HTH1"/>
    <property type="match status" value="1"/>
</dbReference>
<dbReference type="Pfam" id="PF02631">
    <property type="entry name" value="RecX_HTH2"/>
    <property type="match status" value="1"/>
</dbReference>
<dbReference type="Pfam" id="PF21981">
    <property type="entry name" value="RecX_HTH3"/>
    <property type="match status" value="1"/>
</dbReference>
<protein>
    <recommendedName>
        <fullName>Regulatory protein RecX</fullName>
    </recommendedName>
</protein>